<dbReference type="EC" id="1.1.1.79" evidence="1"/>
<dbReference type="EC" id="1.1.1.81" evidence="1"/>
<dbReference type="EMBL" id="BX950851">
    <property type="protein sequence ID" value="CAG72998.1"/>
    <property type="status" value="ALT_INIT"/>
    <property type="molecule type" value="Genomic_DNA"/>
</dbReference>
<dbReference type="RefSeq" id="WP_011091721.1">
    <property type="nucleotide sequence ID" value="NC_004547.2"/>
</dbReference>
<dbReference type="SMR" id="Q6DB24"/>
<dbReference type="STRING" id="218491.ECA0078"/>
<dbReference type="KEGG" id="eca:ECA0078"/>
<dbReference type="PATRIC" id="fig|218491.5.peg.81"/>
<dbReference type="eggNOG" id="COG1052">
    <property type="taxonomic scope" value="Bacteria"/>
</dbReference>
<dbReference type="HOGENOM" id="CLU_019796_1_2_6"/>
<dbReference type="OrthoDB" id="9805416at2"/>
<dbReference type="Proteomes" id="UP000007966">
    <property type="component" value="Chromosome"/>
</dbReference>
<dbReference type="GO" id="GO:0005829">
    <property type="term" value="C:cytosol"/>
    <property type="evidence" value="ECO:0007669"/>
    <property type="project" value="TreeGrafter"/>
</dbReference>
<dbReference type="GO" id="GO:0005886">
    <property type="term" value="C:plasma membrane"/>
    <property type="evidence" value="ECO:0007669"/>
    <property type="project" value="UniProtKB-UniRule"/>
</dbReference>
<dbReference type="GO" id="GO:0030267">
    <property type="term" value="F:glyoxylate reductase (NADPH) activity"/>
    <property type="evidence" value="ECO:0007669"/>
    <property type="project" value="UniProtKB-UniRule"/>
</dbReference>
<dbReference type="GO" id="GO:0008465">
    <property type="term" value="F:hydroxypyruvate reductase (NADH) activity"/>
    <property type="evidence" value="ECO:0007669"/>
    <property type="project" value="RHEA"/>
</dbReference>
<dbReference type="GO" id="GO:0120509">
    <property type="term" value="F:hydroxypyruvate reductase (NADPH) activity"/>
    <property type="evidence" value="ECO:0007669"/>
    <property type="project" value="RHEA"/>
</dbReference>
<dbReference type="GO" id="GO:0051287">
    <property type="term" value="F:NAD binding"/>
    <property type="evidence" value="ECO:0007669"/>
    <property type="project" value="InterPro"/>
</dbReference>
<dbReference type="CDD" id="cd05301">
    <property type="entry name" value="GDH"/>
    <property type="match status" value="1"/>
</dbReference>
<dbReference type="FunFam" id="3.40.50.720:FF:000026">
    <property type="entry name" value="Glyoxylate/hydroxypyruvate reductase B"/>
    <property type="match status" value="1"/>
</dbReference>
<dbReference type="Gene3D" id="3.40.50.720">
    <property type="entry name" value="NAD(P)-binding Rossmann-like Domain"/>
    <property type="match status" value="2"/>
</dbReference>
<dbReference type="HAMAP" id="MF_01667">
    <property type="entry name" value="2_Hacid_dh_C_GhrB"/>
    <property type="match status" value="1"/>
</dbReference>
<dbReference type="InterPro" id="IPR050223">
    <property type="entry name" value="D-isomer_2-hydroxyacid_DH"/>
</dbReference>
<dbReference type="InterPro" id="IPR006139">
    <property type="entry name" value="D-isomer_2_OHA_DH_cat_dom"/>
</dbReference>
<dbReference type="InterPro" id="IPR029753">
    <property type="entry name" value="D-isomer_DH_CS"/>
</dbReference>
<dbReference type="InterPro" id="IPR006140">
    <property type="entry name" value="D-isomer_DH_NAD-bd"/>
</dbReference>
<dbReference type="InterPro" id="IPR023756">
    <property type="entry name" value="Glyo/OHPyrv_Rdtase_B"/>
</dbReference>
<dbReference type="InterPro" id="IPR036291">
    <property type="entry name" value="NAD(P)-bd_dom_sf"/>
</dbReference>
<dbReference type="NCBIfam" id="NF011938">
    <property type="entry name" value="PRK15409.1"/>
    <property type="match status" value="1"/>
</dbReference>
<dbReference type="PANTHER" id="PTHR10996">
    <property type="entry name" value="2-HYDROXYACID DEHYDROGENASE-RELATED"/>
    <property type="match status" value="1"/>
</dbReference>
<dbReference type="PANTHER" id="PTHR10996:SF283">
    <property type="entry name" value="GLYOXYLATE_HYDROXYPYRUVATE REDUCTASE B"/>
    <property type="match status" value="1"/>
</dbReference>
<dbReference type="Pfam" id="PF00389">
    <property type="entry name" value="2-Hacid_dh"/>
    <property type="match status" value="1"/>
</dbReference>
<dbReference type="Pfam" id="PF02826">
    <property type="entry name" value="2-Hacid_dh_C"/>
    <property type="match status" value="1"/>
</dbReference>
<dbReference type="SUPFAM" id="SSF52283">
    <property type="entry name" value="Formate/glycerate dehydrogenase catalytic domain-like"/>
    <property type="match status" value="1"/>
</dbReference>
<dbReference type="SUPFAM" id="SSF51735">
    <property type="entry name" value="NAD(P)-binding Rossmann-fold domains"/>
    <property type="match status" value="1"/>
</dbReference>
<dbReference type="PROSITE" id="PS00671">
    <property type="entry name" value="D_2_HYDROXYACID_DH_3"/>
    <property type="match status" value="1"/>
</dbReference>
<keyword id="KW-0963">Cytoplasm</keyword>
<keyword id="KW-0520">NAD</keyword>
<keyword id="KW-0521">NADP</keyword>
<keyword id="KW-0560">Oxidoreductase</keyword>
<keyword id="KW-1185">Reference proteome</keyword>
<accession>Q6DB24</accession>
<evidence type="ECO:0000255" key="1">
    <source>
        <dbReference type="HAMAP-Rule" id="MF_01667"/>
    </source>
</evidence>
<evidence type="ECO:0000305" key="2"/>
<comment type="function">
    <text evidence="1">Catalyzes the NADPH-dependent reduction of glyoxylate and hydroxypyruvate into glycolate and glycerate, respectively.</text>
</comment>
<comment type="catalytic activity">
    <reaction evidence="1">
        <text>glycolate + NADP(+) = glyoxylate + NADPH + H(+)</text>
        <dbReference type="Rhea" id="RHEA:10992"/>
        <dbReference type="ChEBI" id="CHEBI:15378"/>
        <dbReference type="ChEBI" id="CHEBI:29805"/>
        <dbReference type="ChEBI" id="CHEBI:36655"/>
        <dbReference type="ChEBI" id="CHEBI:57783"/>
        <dbReference type="ChEBI" id="CHEBI:58349"/>
        <dbReference type="EC" id="1.1.1.79"/>
    </reaction>
</comment>
<comment type="catalytic activity">
    <reaction evidence="1">
        <text>(R)-glycerate + NAD(+) = 3-hydroxypyruvate + NADH + H(+)</text>
        <dbReference type="Rhea" id="RHEA:17905"/>
        <dbReference type="ChEBI" id="CHEBI:15378"/>
        <dbReference type="ChEBI" id="CHEBI:16659"/>
        <dbReference type="ChEBI" id="CHEBI:17180"/>
        <dbReference type="ChEBI" id="CHEBI:57540"/>
        <dbReference type="ChEBI" id="CHEBI:57945"/>
        <dbReference type="EC" id="1.1.1.81"/>
    </reaction>
</comment>
<comment type="catalytic activity">
    <reaction evidence="1">
        <text>(R)-glycerate + NADP(+) = 3-hydroxypyruvate + NADPH + H(+)</text>
        <dbReference type="Rhea" id="RHEA:18657"/>
        <dbReference type="ChEBI" id="CHEBI:15378"/>
        <dbReference type="ChEBI" id="CHEBI:16659"/>
        <dbReference type="ChEBI" id="CHEBI:17180"/>
        <dbReference type="ChEBI" id="CHEBI:57783"/>
        <dbReference type="ChEBI" id="CHEBI:58349"/>
        <dbReference type="EC" id="1.1.1.81"/>
    </reaction>
</comment>
<comment type="subunit">
    <text evidence="1">Homodimer.</text>
</comment>
<comment type="subcellular location">
    <subcellularLocation>
        <location evidence="1">Cytoplasm</location>
    </subcellularLocation>
</comment>
<comment type="similarity">
    <text evidence="1">Belongs to the D-isomer specific 2-hydroxyacid dehydrogenase family. GhrB subfamily.</text>
</comment>
<comment type="sequence caution" evidence="2">
    <conflict type="erroneous initiation">
        <sequence resource="EMBL-CDS" id="CAG72998"/>
    </conflict>
</comment>
<reference key="1">
    <citation type="journal article" date="2004" name="Proc. Natl. Acad. Sci. U.S.A.">
        <title>Genome sequence of the enterobacterial phytopathogen Erwinia carotovora subsp. atroseptica and characterization of virulence factors.</title>
        <authorList>
            <person name="Bell K.S."/>
            <person name="Sebaihia M."/>
            <person name="Pritchard L."/>
            <person name="Holden M.T.G."/>
            <person name="Hyman L.J."/>
            <person name="Holeva M.C."/>
            <person name="Thomson N.R."/>
            <person name="Bentley S.D."/>
            <person name="Churcher L.J.C."/>
            <person name="Mungall K."/>
            <person name="Atkin R."/>
            <person name="Bason N."/>
            <person name="Brooks K."/>
            <person name="Chillingworth T."/>
            <person name="Clark K."/>
            <person name="Doggett J."/>
            <person name="Fraser A."/>
            <person name="Hance Z."/>
            <person name="Hauser H."/>
            <person name="Jagels K."/>
            <person name="Moule S."/>
            <person name="Norbertczak H."/>
            <person name="Ormond D."/>
            <person name="Price C."/>
            <person name="Quail M.A."/>
            <person name="Sanders M."/>
            <person name="Walker D."/>
            <person name="Whitehead S."/>
            <person name="Salmond G.P.C."/>
            <person name="Birch P.R.J."/>
            <person name="Parkhill J."/>
            <person name="Toth I.K."/>
        </authorList>
    </citation>
    <scope>NUCLEOTIDE SEQUENCE [LARGE SCALE GENOMIC DNA]</scope>
    <source>
        <strain>SCRI 1043 / ATCC BAA-672</strain>
    </source>
</reference>
<gene>
    <name evidence="1" type="primary">ghrB</name>
    <name type="ordered locus">ECA0078</name>
</gene>
<organism>
    <name type="scientific">Pectobacterium atrosepticum (strain SCRI 1043 / ATCC BAA-672)</name>
    <name type="common">Erwinia carotovora subsp. atroseptica</name>
    <dbReference type="NCBI Taxonomy" id="218491"/>
    <lineage>
        <taxon>Bacteria</taxon>
        <taxon>Pseudomonadati</taxon>
        <taxon>Pseudomonadota</taxon>
        <taxon>Gammaproteobacteria</taxon>
        <taxon>Enterobacterales</taxon>
        <taxon>Pectobacteriaceae</taxon>
        <taxon>Pectobacterium</taxon>
    </lineage>
</organism>
<proteinExistence type="inferred from homology"/>
<protein>
    <recommendedName>
        <fullName evidence="1">Glyoxylate/hydroxypyruvate reductase B</fullName>
        <ecNumber evidence="1">1.1.1.79</ecNumber>
        <ecNumber evidence="1">1.1.1.81</ecNumber>
    </recommendedName>
</protein>
<feature type="chain" id="PRO_0000348382" description="Glyoxylate/hydroxypyruvate reductase B">
    <location>
        <begin position="1"/>
        <end position="320"/>
    </location>
</feature>
<feature type="active site" evidence="1">
    <location>
        <position position="233"/>
    </location>
</feature>
<feature type="active site" evidence="1">
    <location>
        <position position="262"/>
    </location>
</feature>
<feature type="active site" description="Proton donor" evidence="1">
    <location>
        <position position="281"/>
    </location>
</feature>
<sequence>MKPSVILYKKVADDLRARLDQHFTVTELDAFPALDHPALATAEGIIGSGGKVDKDFLQHAPRLRAASTISVGYDTFNVDALNEKGVILMHTPTVLTETVADTVLALMLASARRVVEVVERVKAGEWKGGVGSDWFGTDVHHKTIGILGMGRIGLAVAQRAHFGFSMPVLYNARRHHAEAEERFNARHCDLDTLLAESDFLCITLPLTAETHHLIGREQLAKMKPSAILINIGRGAVVDEDALTEALVKGTIQAAGLDVFVKEPLPVDSPLLDLPNVVALPHIGSATHETRYDMAACAVDNLIAALSGQVKENCVNPQVLK</sequence>
<name>GHRB_PECAS</name>